<dbReference type="EMBL" id="AF063191">
    <property type="protein sequence ID" value="AAC16382.1"/>
    <property type="molecule type" value="Genomic_DNA"/>
</dbReference>
<dbReference type="SMR" id="O63848"/>
<dbReference type="GO" id="GO:0005743">
    <property type="term" value="C:mitochondrial inner membrane"/>
    <property type="evidence" value="ECO:0007669"/>
    <property type="project" value="UniProtKB-SubCell"/>
</dbReference>
<dbReference type="GO" id="GO:0045275">
    <property type="term" value="C:respiratory chain complex III"/>
    <property type="evidence" value="ECO:0007669"/>
    <property type="project" value="InterPro"/>
</dbReference>
<dbReference type="GO" id="GO:0046872">
    <property type="term" value="F:metal ion binding"/>
    <property type="evidence" value="ECO:0007669"/>
    <property type="project" value="UniProtKB-KW"/>
</dbReference>
<dbReference type="GO" id="GO:0008121">
    <property type="term" value="F:ubiquinol-cytochrome-c reductase activity"/>
    <property type="evidence" value="ECO:0007669"/>
    <property type="project" value="InterPro"/>
</dbReference>
<dbReference type="GO" id="GO:0006122">
    <property type="term" value="P:mitochondrial electron transport, ubiquinol to cytochrome c"/>
    <property type="evidence" value="ECO:0007669"/>
    <property type="project" value="TreeGrafter"/>
</dbReference>
<dbReference type="CDD" id="cd00290">
    <property type="entry name" value="cytochrome_b_C"/>
    <property type="match status" value="1"/>
</dbReference>
<dbReference type="CDD" id="cd00284">
    <property type="entry name" value="Cytochrome_b_N"/>
    <property type="match status" value="1"/>
</dbReference>
<dbReference type="FunFam" id="1.20.810.10:FF:000002">
    <property type="entry name" value="Cytochrome b"/>
    <property type="match status" value="1"/>
</dbReference>
<dbReference type="Gene3D" id="1.20.810.10">
    <property type="entry name" value="Cytochrome Bc1 Complex, Chain C"/>
    <property type="match status" value="1"/>
</dbReference>
<dbReference type="InterPro" id="IPR005798">
    <property type="entry name" value="Cyt_b/b6_C"/>
</dbReference>
<dbReference type="InterPro" id="IPR036150">
    <property type="entry name" value="Cyt_b/b6_C_sf"/>
</dbReference>
<dbReference type="InterPro" id="IPR005797">
    <property type="entry name" value="Cyt_b/b6_N"/>
</dbReference>
<dbReference type="InterPro" id="IPR027387">
    <property type="entry name" value="Cytb/b6-like_sf"/>
</dbReference>
<dbReference type="InterPro" id="IPR030689">
    <property type="entry name" value="Cytochrome_b"/>
</dbReference>
<dbReference type="InterPro" id="IPR048260">
    <property type="entry name" value="Cytochrome_b_C_euk/bac"/>
</dbReference>
<dbReference type="InterPro" id="IPR048259">
    <property type="entry name" value="Cytochrome_b_N_euk/bac"/>
</dbReference>
<dbReference type="InterPro" id="IPR016174">
    <property type="entry name" value="Di-haem_cyt_TM"/>
</dbReference>
<dbReference type="PANTHER" id="PTHR19271">
    <property type="entry name" value="CYTOCHROME B"/>
    <property type="match status" value="1"/>
</dbReference>
<dbReference type="PANTHER" id="PTHR19271:SF16">
    <property type="entry name" value="CYTOCHROME B"/>
    <property type="match status" value="1"/>
</dbReference>
<dbReference type="Pfam" id="PF00032">
    <property type="entry name" value="Cytochrom_B_C"/>
    <property type="match status" value="1"/>
</dbReference>
<dbReference type="Pfam" id="PF00033">
    <property type="entry name" value="Cytochrome_B"/>
    <property type="match status" value="1"/>
</dbReference>
<dbReference type="PIRSF" id="PIRSF038885">
    <property type="entry name" value="COB"/>
    <property type="match status" value="1"/>
</dbReference>
<dbReference type="SUPFAM" id="SSF81648">
    <property type="entry name" value="a domain/subunit of cytochrome bc1 complex (Ubiquinol-cytochrome c reductase)"/>
    <property type="match status" value="1"/>
</dbReference>
<dbReference type="SUPFAM" id="SSF81342">
    <property type="entry name" value="Transmembrane di-heme cytochromes"/>
    <property type="match status" value="1"/>
</dbReference>
<dbReference type="PROSITE" id="PS51003">
    <property type="entry name" value="CYTB_CTER"/>
    <property type="match status" value="1"/>
</dbReference>
<dbReference type="PROSITE" id="PS51002">
    <property type="entry name" value="CYTB_NTER"/>
    <property type="match status" value="1"/>
</dbReference>
<evidence type="ECO:0000250" key="1"/>
<evidence type="ECO:0000250" key="2">
    <source>
        <dbReference type="UniProtKB" id="P00157"/>
    </source>
</evidence>
<evidence type="ECO:0000250" key="3">
    <source>
        <dbReference type="UniProtKB" id="P00163"/>
    </source>
</evidence>
<evidence type="ECO:0000255" key="4">
    <source>
        <dbReference type="PROSITE-ProRule" id="PRU00967"/>
    </source>
</evidence>
<evidence type="ECO:0000255" key="5">
    <source>
        <dbReference type="PROSITE-ProRule" id="PRU00968"/>
    </source>
</evidence>
<feature type="chain" id="PRO_0000061519" description="Cytochrome b">
    <location>
        <begin position="1"/>
        <end position="386"/>
    </location>
</feature>
<feature type="transmembrane region" description="Helical" evidence="2">
    <location>
        <begin position="39"/>
        <end position="59"/>
    </location>
</feature>
<feature type="transmembrane region" description="Helical" evidence="2">
    <location>
        <begin position="83"/>
        <end position="104"/>
    </location>
</feature>
<feature type="transmembrane region" description="Helical" evidence="2">
    <location>
        <begin position="119"/>
        <end position="139"/>
    </location>
</feature>
<feature type="transmembrane region" description="Helical" evidence="2">
    <location>
        <begin position="184"/>
        <end position="204"/>
    </location>
</feature>
<feature type="transmembrane region" description="Helical" evidence="2">
    <location>
        <begin position="232"/>
        <end position="252"/>
    </location>
</feature>
<feature type="transmembrane region" description="Helical" evidence="2">
    <location>
        <begin position="294"/>
        <end position="314"/>
    </location>
</feature>
<feature type="transmembrane region" description="Helical" evidence="2">
    <location>
        <begin position="326"/>
        <end position="346"/>
    </location>
</feature>
<feature type="transmembrane region" description="Helical" evidence="2">
    <location>
        <begin position="353"/>
        <end position="374"/>
    </location>
</feature>
<feature type="binding site" description="axial binding residue" evidence="2">
    <location>
        <position position="89"/>
    </location>
    <ligand>
        <name>heme b</name>
        <dbReference type="ChEBI" id="CHEBI:60344"/>
        <label>b562</label>
    </ligand>
    <ligandPart>
        <name>Fe</name>
        <dbReference type="ChEBI" id="CHEBI:18248"/>
    </ligandPart>
</feature>
<feature type="binding site" description="axial binding residue" evidence="2">
    <location>
        <position position="103"/>
    </location>
    <ligand>
        <name>heme b</name>
        <dbReference type="ChEBI" id="CHEBI:60344"/>
        <label>b566</label>
    </ligand>
    <ligandPart>
        <name>Fe</name>
        <dbReference type="ChEBI" id="CHEBI:18248"/>
    </ligandPart>
</feature>
<feature type="binding site" description="axial binding residue" evidence="2">
    <location>
        <position position="188"/>
    </location>
    <ligand>
        <name>heme b</name>
        <dbReference type="ChEBI" id="CHEBI:60344"/>
        <label>b562</label>
    </ligand>
    <ligandPart>
        <name>Fe</name>
        <dbReference type="ChEBI" id="CHEBI:18248"/>
    </ligandPart>
</feature>
<feature type="binding site" description="axial binding residue" evidence="2">
    <location>
        <position position="202"/>
    </location>
    <ligand>
        <name>heme b</name>
        <dbReference type="ChEBI" id="CHEBI:60344"/>
        <label>b566</label>
    </ligand>
    <ligandPart>
        <name>Fe</name>
        <dbReference type="ChEBI" id="CHEBI:18248"/>
    </ligandPart>
</feature>
<feature type="binding site" evidence="2">
    <location>
        <position position="207"/>
    </location>
    <ligand>
        <name>a ubiquinone</name>
        <dbReference type="ChEBI" id="CHEBI:16389"/>
    </ligand>
</feature>
<reference key="1">
    <citation type="journal article" date="1998" name="J. Mol. Evol.">
        <title>Mitochondrial DNA of the coral Sarcophyton glaucum contains a gene for a homologue of bacterial MutS: a possible case of gene transfer from the nucleus to the mitochondrion.</title>
        <authorList>
            <person name="Pont-Kingdon G."/>
            <person name="Okada N.A."/>
            <person name="Macfarlane J.L."/>
            <person name="Beagley C.T."/>
            <person name="Watkins-Sims C.D."/>
            <person name="Cavalier-Smith T."/>
            <person name="Clark-Walker G.D."/>
            <person name="Wolstenholme D.R."/>
        </authorList>
    </citation>
    <scope>NUCLEOTIDE SEQUENCE [GENOMIC DNA]</scope>
</reference>
<sequence length="386" mass="43715">MESPNKMLRVRTQHPIISIVNGVLVDLPAPSNISYYWNFGSLLGLCLVIQLITGIFLAMHYCPDVSLAFDSISHILRDVNHGFMLKYIHANGASLFFLCVYIHMGRGLYYGSYMKMDVWNIGVIIYLVMMLTAFLGYVLPWGQMSFWGATVITNFCSAIPYVGTDVVQWIWGGFSVSNATLNRFFSLHYLFPFLIAGLGVLHILSLHTAGSNNPLGIDSNIDKVTFHVYYTYKDLFGIMVLSSILVILCYFMPNVLGDPENFIQANPLVTPVHIQPEWYFLFAYAILRSIPNKLGGVLAMVFSILVLLLLPFIHTSKLRALTFRPLGKIAFWFLVADFILLTWLGANPVEEPYIMIGQFASLFYFCYFLVLVPLLGWAETTLLRMK</sequence>
<gene>
    <name type="primary">MT-CYB</name>
    <name type="synonym">COB</name>
    <name type="synonym">CYTB</name>
    <name type="synonym">MTCYB</name>
</gene>
<name>CYB_SARGL</name>
<comment type="function">
    <text evidence="2">Component of the ubiquinol-cytochrome c reductase complex (complex III or cytochrome b-c1 complex) that is part of the mitochondrial respiratory chain. The b-c1 complex mediates electron transfer from ubiquinol to cytochrome c. Contributes to the generation of a proton gradient across the mitochondrial membrane that is then used for ATP synthesis.</text>
</comment>
<comment type="cofactor">
    <cofactor evidence="2">
        <name>heme b</name>
        <dbReference type="ChEBI" id="CHEBI:60344"/>
    </cofactor>
    <text evidence="2">Binds 2 heme b groups non-covalently.</text>
</comment>
<comment type="subunit">
    <text evidence="2">The main subunits of complex b-c1 are: cytochrome b, cytochrome c1 and the Rieske protein.</text>
</comment>
<comment type="subcellular location">
    <subcellularLocation>
        <location evidence="3">Mitochondrion inner membrane</location>
        <topology evidence="3">Multi-pass membrane protein</topology>
    </subcellularLocation>
</comment>
<comment type="miscellaneous">
    <text evidence="1">Heme 1 (or BL or b562) is low-potential and absorbs at about 562 nm, and heme 2 (or BH or b566) is high-potential and absorbs at about 566 nm.</text>
</comment>
<comment type="similarity">
    <text evidence="4 5">Belongs to the cytochrome b family.</text>
</comment>
<comment type="caution">
    <text evidence="2">The full-length protein contains only eight transmembrane helices, not nine as predicted by bioinformatics tools.</text>
</comment>
<organism>
    <name type="scientific">Sarcophyton glaucum</name>
    <name type="common">Toadstool umbrella leather coral</name>
    <dbReference type="NCBI Taxonomy" id="70919"/>
    <lineage>
        <taxon>Eukaryota</taxon>
        <taxon>Metazoa</taxon>
        <taxon>Cnidaria</taxon>
        <taxon>Anthozoa</taxon>
        <taxon>Octocorallia</taxon>
        <taxon>Malacalcyonacea</taxon>
        <taxon>Alcyoniidae</taxon>
        <taxon>Sarcophyton</taxon>
    </lineage>
</organism>
<accession>O63848</accession>
<geneLocation type="mitochondrion"/>
<protein>
    <recommendedName>
        <fullName>Cytochrome b</fullName>
    </recommendedName>
    <alternativeName>
        <fullName>Complex III subunit 3</fullName>
    </alternativeName>
    <alternativeName>
        <fullName>Complex III subunit III</fullName>
    </alternativeName>
    <alternativeName>
        <fullName>Cytochrome b-c1 complex subunit 3</fullName>
    </alternativeName>
    <alternativeName>
        <fullName>Ubiquinol-cytochrome-c reductase complex cytochrome b subunit</fullName>
    </alternativeName>
</protein>
<proteinExistence type="inferred from homology"/>
<keyword id="KW-0249">Electron transport</keyword>
<keyword id="KW-0349">Heme</keyword>
<keyword id="KW-0408">Iron</keyword>
<keyword id="KW-0472">Membrane</keyword>
<keyword id="KW-0479">Metal-binding</keyword>
<keyword id="KW-0496">Mitochondrion</keyword>
<keyword id="KW-0999">Mitochondrion inner membrane</keyword>
<keyword id="KW-0679">Respiratory chain</keyword>
<keyword id="KW-0812">Transmembrane</keyword>
<keyword id="KW-1133">Transmembrane helix</keyword>
<keyword id="KW-0813">Transport</keyword>
<keyword id="KW-0830">Ubiquinone</keyword>